<accession>Q2JI48</accession>
<protein>
    <recommendedName>
        <fullName evidence="1">Small ribosomal subunit protein bS20</fullName>
    </recommendedName>
    <alternativeName>
        <fullName evidence="2">30S ribosomal protein S20</fullName>
    </alternativeName>
</protein>
<sequence>MPRIKSAIKRVQIAERNRLRNKATKAMVRALMKKVISLSTAYAANPQQETLQEIQAAMSAAFSRIDKAAKTGVLHKNTAARRKARLARIVKLSVASSEKSQAEALVEHG</sequence>
<evidence type="ECO:0000255" key="1">
    <source>
        <dbReference type="HAMAP-Rule" id="MF_00500"/>
    </source>
</evidence>
<evidence type="ECO:0000305" key="2"/>
<name>RS20_SYNJB</name>
<organism>
    <name type="scientific">Synechococcus sp. (strain JA-2-3B'a(2-13))</name>
    <name type="common">Cyanobacteria bacterium Yellowstone B-Prime</name>
    <dbReference type="NCBI Taxonomy" id="321332"/>
    <lineage>
        <taxon>Bacteria</taxon>
        <taxon>Bacillati</taxon>
        <taxon>Cyanobacteriota</taxon>
        <taxon>Cyanophyceae</taxon>
        <taxon>Synechococcales</taxon>
        <taxon>Synechococcaceae</taxon>
        <taxon>Synechococcus</taxon>
    </lineage>
</organism>
<comment type="function">
    <text evidence="1">Binds directly to 16S ribosomal RNA.</text>
</comment>
<comment type="similarity">
    <text evidence="1">Belongs to the bacterial ribosomal protein bS20 family.</text>
</comment>
<gene>
    <name evidence="1" type="primary">rpsT</name>
    <name evidence="1" type="synonym">rps20</name>
    <name type="ordered locus">CYB_2798</name>
</gene>
<keyword id="KW-1185">Reference proteome</keyword>
<keyword id="KW-0687">Ribonucleoprotein</keyword>
<keyword id="KW-0689">Ribosomal protein</keyword>
<keyword id="KW-0694">RNA-binding</keyword>
<keyword id="KW-0699">rRNA-binding</keyword>
<feature type="chain" id="PRO_0000236459" description="Small ribosomal subunit protein bS20">
    <location>
        <begin position="1"/>
        <end position="109"/>
    </location>
</feature>
<dbReference type="EMBL" id="CP000240">
    <property type="protein sequence ID" value="ABD03721.1"/>
    <property type="molecule type" value="Genomic_DNA"/>
</dbReference>
<dbReference type="RefSeq" id="WP_011434338.1">
    <property type="nucleotide sequence ID" value="NC_007776.1"/>
</dbReference>
<dbReference type="SMR" id="Q2JI48"/>
<dbReference type="STRING" id="321332.CYB_2798"/>
<dbReference type="KEGG" id="cyb:CYB_2798"/>
<dbReference type="eggNOG" id="COG0268">
    <property type="taxonomic scope" value="Bacteria"/>
</dbReference>
<dbReference type="HOGENOM" id="CLU_160655_5_0_3"/>
<dbReference type="OrthoDB" id="9808392at2"/>
<dbReference type="Proteomes" id="UP000001938">
    <property type="component" value="Chromosome"/>
</dbReference>
<dbReference type="GO" id="GO:0005829">
    <property type="term" value="C:cytosol"/>
    <property type="evidence" value="ECO:0007669"/>
    <property type="project" value="TreeGrafter"/>
</dbReference>
<dbReference type="GO" id="GO:0015935">
    <property type="term" value="C:small ribosomal subunit"/>
    <property type="evidence" value="ECO:0007669"/>
    <property type="project" value="TreeGrafter"/>
</dbReference>
<dbReference type="GO" id="GO:0070181">
    <property type="term" value="F:small ribosomal subunit rRNA binding"/>
    <property type="evidence" value="ECO:0007669"/>
    <property type="project" value="TreeGrafter"/>
</dbReference>
<dbReference type="GO" id="GO:0003735">
    <property type="term" value="F:structural constituent of ribosome"/>
    <property type="evidence" value="ECO:0007669"/>
    <property type="project" value="InterPro"/>
</dbReference>
<dbReference type="GO" id="GO:0006412">
    <property type="term" value="P:translation"/>
    <property type="evidence" value="ECO:0007669"/>
    <property type="project" value="UniProtKB-UniRule"/>
</dbReference>
<dbReference type="Gene3D" id="1.20.58.110">
    <property type="entry name" value="Ribosomal protein S20"/>
    <property type="match status" value="1"/>
</dbReference>
<dbReference type="HAMAP" id="MF_00500">
    <property type="entry name" value="Ribosomal_bS20"/>
    <property type="match status" value="1"/>
</dbReference>
<dbReference type="InterPro" id="IPR002583">
    <property type="entry name" value="Ribosomal_bS20"/>
</dbReference>
<dbReference type="InterPro" id="IPR036510">
    <property type="entry name" value="Ribosomal_bS20_sf"/>
</dbReference>
<dbReference type="NCBIfam" id="TIGR00029">
    <property type="entry name" value="S20"/>
    <property type="match status" value="1"/>
</dbReference>
<dbReference type="PANTHER" id="PTHR33398">
    <property type="entry name" value="30S RIBOSOMAL PROTEIN S20"/>
    <property type="match status" value="1"/>
</dbReference>
<dbReference type="PANTHER" id="PTHR33398:SF1">
    <property type="entry name" value="SMALL RIBOSOMAL SUBUNIT PROTEIN BS20C"/>
    <property type="match status" value="1"/>
</dbReference>
<dbReference type="Pfam" id="PF01649">
    <property type="entry name" value="Ribosomal_S20p"/>
    <property type="match status" value="1"/>
</dbReference>
<dbReference type="SUPFAM" id="SSF46992">
    <property type="entry name" value="Ribosomal protein S20"/>
    <property type="match status" value="1"/>
</dbReference>
<proteinExistence type="inferred from homology"/>
<reference key="1">
    <citation type="journal article" date="2007" name="ISME J.">
        <title>Population level functional diversity in a microbial community revealed by comparative genomic and metagenomic analyses.</title>
        <authorList>
            <person name="Bhaya D."/>
            <person name="Grossman A.R."/>
            <person name="Steunou A.-S."/>
            <person name="Khuri N."/>
            <person name="Cohan F.M."/>
            <person name="Hamamura N."/>
            <person name="Melendrez M.C."/>
            <person name="Bateson M.M."/>
            <person name="Ward D.M."/>
            <person name="Heidelberg J.F."/>
        </authorList>
    </citation>
    <scope>NUCLEOTIDE SEQUENCE [LARGE SCALE GENOMIC DNA]</scope>
    <source>
        <strain>JA-2-3B'a(2-13)</strain>
    </source>
</reference>